<evidence type="ECO:0000255" key="1">
    <source>
        <dbReference type="HAMAP-Rule" id="MF_00127"/>
    </source>
</evidence>
<name>SYH_THEP1</name>
<comment type="catalytic activity">
    <reaction evidence="1">
        <text>tRNA(His) + L-histidine + ATP = L-histidyl-tRNA(His) + AMP + diphosphate + H(+)</text>
        <dbReference type="Rhea" id="RHEA:17313"/>
        <dbReference type="Rhea" id="RHEA-COMP:9665"/>
        <dbReference type="Rhea" id="RHEA-COMP:9689"/>
        <dbReference type="ChEBI" id="CHEBI:15378"/>
        <dbReference type="ChEBI" id="CHEBI:30616"/>
        <dbReference type="ChEBI" id="CHEBI:33019"/>
        <dbReference type="ChEBI" id="CHEBI:57595"/>
        <dbReference type="ChEBI" id="CHEBI:78442"/>
        <dbReference type="ChEBI" id="CHEBI:78527"/>
        <dbReference type="ChEBI" id="CHEBI:456215"/>
        <dbReference type="EC" id="6.1.1.21"/>
    </reaction>
</comment>
<comment type="subunit">
    <text evidence="1">Homodimer.</text>
</comment>
<comment type="subcellular location">
    <subcellularLocation>
        <location evidence="1">Cytoplasm</location>
    </subcellularLocation>
</comment>
<comment type="similarity">
    <text evidence="1">Belongs to the class-II aminoacyl-tRNA synthetase family.</text>
</comment>
<accession>A5IN85</accession>
<feature type="chain" id="PRO_1000016478" description="Histidine--tRNA ligase">
    <location>
        <begin position="1"/>
        <end position="420"/>
    </location>
</feature>
<keyword id="KW-0030">Aminoacyl-tRNA synthetase</keyword>
<keyword id="KW-0067">ATP-binding</keyword>
<keyword id="KW-0963">Cytoplasm</keyword>
<keyword id="KW-0436">Ligase</keyword>
<keyword id="KW-0547">Nucleotide-binding</keyword>
<keyword id="KW-0648">Protein biosynthesis</keyword>
<reference key="1">
    <citation type="submission" date="2007-05" db="EMBL/GenBank/DDBJ databases">
        <title>Complete sequence of Thermotoga petrophila RKU-1.</title>
        <authorList>
            <consortium name="US DOE Joint Genome Institute"/>
            <person name="Copeland A."/>
            <person name="Lucas S."/>
            <person name="Lapidus A."/>
            <person name="Barry K."/>
            <person name="Glavina del Rio T."/>
            <person name="Dalin E."/>
            <person name="Tice H."/>
            <person name="Pitluck S."/>
            <person name="Sims D."/>
            <person name="Brettin T."/>
            <person name="Bruce D."/>
            <person name="Detter J.C."/>
            <person name="Han C."/>
            <person name="Tapia R."/>
            <person name="Schmutz J."/>
            <person name="Larimer F."/>
            <person name="Land M."/>
            <person name="Hauser L."/>
            <person name="Kyrpides N."/>
            <person name="Mikhailova N."/>
            <person name="Nelson K."/>
            <person name="Gogarten J.P."/>
            <person name="Noll K."/>
            <person name="Richardson P."/>
        </authorList>
    </citation>
    <scope>NUCLEOTIDE SEQUENCE [LARGE SCALE GENOMIC DNA]</scope>
    <source>
        <strain>ATCC BAA-488 / DSM 13995 / JCM 10881 / RKU-1</strain>
    </source>
</reference>
<protein>
    <recommendedName>
        <fullName evidence="1">Histidine--tRNA ligase</fullName>
        <ecNumber evidence="1">6.1.1.21</ecNumber>
    </recommendedName>
    <alternativeName>
        <fullName evidence="1">Histidyl-tRNA synthetase</fullName>
        <shortName evidence="1">HisRS</shortName>
    </alternativeName>
</protein>
<sequence>MNYKRIKGTNDIFGEEIWYWRYVEETFRNVCESAGIEEIRTPIFEQTELFVRSVGEESDIVQKEMYTFQDKAGRSITLRPEGTAPVVRAFLENSLIDRGFQQRYYYIGPMFRYEKPQSGRLRQFHQVGFEIIGSESPKADFEVIMLVDTFLRKLGLTKYRIHLNSIGCSACRKNYREALKEYYGQILANLCDDCKRRYETNILRLLDCKVDHEYALNAPKSVDYLCDSCKTHYEKLKEYLNTFEIEYVEDHTLVRGLDYYTRTVFEVRHEGLGAQNTIAGGGRYDGLFVELGGSSVPALGFAGGIERIILALKAEEIEIPIKNVHLVYVVTLGEKAFADGVQLAVELRKKGLSVDVDIMDRKLSGQLKHAHRMGSRYAVIIGDEELEKGIVILRDLETGDQVEVDRDFAVDYIAERVSKD</sequence>
<gene>
    <name evidence="1" type="primary">hisS</name>
    <name type="ordered locus">Tpet_1653</name>
</gene>
<proteinExistence type="inferred from homology"/>
<organism>
    <name type="scientific">Thermotoga petrophila (strain ATCC BAA-488 / DSM 13995 / JCM 10881 / RKU-1)</name>
    <dbReference type="NCBI Taxonomy" id="390874"/>
    <lineage>
        <taxon>Bacteria</taxon>
        <taxon>Thermotogati</taxon>
        <taxon>Thermotogota</taxon>
        <taxon>Thermotogae</taxon>
        <taxon>Thermotogales</taxon>
        <taxon>Thermotogaceae</taxon>
        <taxon>Thermotoga</taxon>
    </lineage>
</organism>
<dbReference type="EC" id="6.1.1.21" evidence="1"/>
<dbReference type="EMBL" id="CP000702">
    <property type="protein sequence ID" value="ABQ47658.1"/>
    <property type="molecule type" value="Genomic_DNA"/>
</dbReference>
<dbReference type="RefSeq" id="WP_011944067.1">
    <property type="nucleotide sequence ID" value="NC_009486.1"/>
</dbReference>
<dbReference type="SMR" id="A5IN85"/>
<dbReference type="STRING" id="390874.Tpet_1653"/>
<dbReference type="KEGG" id="tpt:Tpet_1653"/>
<dbReference type="eggNOG" id="COG0124">
    <property type="taxonomic scope" value="Bacteria"/>
</dbReference>
<dbReference type="HOGENOM" id="CLU_025113_1_1_0"/>
<dbReference type="Proteomes" id="UP000006558">
    <property type="component" value="Chromosome"/>
</dbReference>
<dbReference type="GO" id="GO:0005737">
    <property type="term" value="C:cytoplasm"/>
    <property type="evidence" value="ECO:0007669"/>
    <property type="project" value="UniProtKB-SubCell"/>
</dbReference>
<dbReference type="GO" id="GO:0005524">
    <property type="term" value="F:ATP binding"/>
    <property type="evidence" value="ECO:0007669"/>
    <property type="project" value="UniProtKB-UniRule"/>
</dbReference>
<dbReference type="GO" id="GO:0004821">
    <property type="term" value="F:histidine-tRNA ligase activity"/>
    <property type="evidence" value="ECO:0007669"/>
    <property type="project" value="UniProtKB-UniRule"/>
</dbReference>
<dbReference type="GO" id="GO:0006427">
    <property type="term" value="P:histidyl-tRNA aminoacylation"/>
    <property type="evidence" value="ECO:0007669"/>
    <property type="project" value="UniProtKB-UniRule"/>
</dbReference>
<dbReference type="CDD" id="cd00773">
    <property type="entry name" value="HisRS-like_core"/>
    <property type="match status" value="1"/>
</dbReference>
<dbReference type="CDD" id="cd00859">
    <property type="entry name" value="HisRS_anticodon"/>
    <property type="match status" value="1"/>
</dbReference>
<dbReference type="FunFam" id="3.30.930.10:FF:000005">
    <property type="entry name" value="Histidine--tRNA ligase"/>
    <property type="match status" value="1"/>
</dbReference>
<dbReference type="Gene3D" id="3.40.50.800">
    <property type="entry name" value="Anticodon-binding domain"/>
    <property type="match status" value="1"/>
</dbReference>
<dbReference type="Gene3D" id="3.30.930.10">
    <property type="entry name" value="Bira Bifunctional Protein, Domain 2"/>
    <property type="match status" value="1"/>
</dbReference>
<dbReference type="HAMAP" id="MF_00127">
    <property type="entry name" value="His_tRNA_synth"/>
    <property type="match status" value="1"/>
</dbReference>
<dbReference type="InterPro" id="IPR006195">
    <property type="entry name" value="aa-tRNA-synth_II"/>
</dbReference>
<dbReference type="InterPro" id="IPR045864">
    <property type="entry name" value="aa-tRNA-synth_II/BPL/LPL"/>
</dbReference>
<dbReference type="InterPro" id="IPR004154">
    <property type="entry name" value="Anticodon-bd"/>
</dbReference>
<dbReference type="InterPro" id="IPR036621">
    <property type="entry name" value="Anticodon-bd_dom_sf"/>
</dbReference>
<dbReference type="InterPro" id="IPR015807">
    <property type="entry name" value="His-tRNA-ligase"/>
</dbReference>
<dbReference type="InterPro" id="IPR041715">
    <property type="entry name" value="HisRS-like_core"/>
</dbReference>
<dbReference type="InterPro" id="IPR004516">
    <property type="entry name" value="HisRS/HisZ"/>
</dbReference>
<dbReference type="InterPro" id="IPR033656">
    <property type="entry name" value="HisRS_anticodon"/>
</dbReference>
<dbReference type="NCBIfam" id="TIGR00442">
    <property type="entry name" value="hisS"/>
    <property type="match status" value="1"/>
</dbReference>
<dbReference type="PANTHER" id="PTHR43707:SF1">
    <property type="entry name" value="HISTIDINE--TRNA LIGASE, MITOCHONDRIAL-RELATED"/>
    <property type="match status" value="1"/>
</dbReference>
<dbReference type="PANTHER" id="PTHR43707">
    <property type="entry name" value="HISTIDYL-TRNA SYNTHETASE"/>
    <property type="match status" value="1"/>
</dbReference>
<dbReference type="Pfam" id="PF03129">
    <property type="entry name" value="HGTP_anticodon"/>
    <property type="match status" value="1"/>
</dbReference>
<dbReference type="Pfam" id="PF13393">
    <property type="entry name" value="tRNA-synt_His"/>
    <property type="match status" value="1"/>
</dbReference>
<dbReference type="PIRSF" id="PIRSF001549">
    <property type="entry name" value="His-tRNA_synth"/>
    <property type="match status" value="1"/>
</dbReference>
<dbReference type="SUPFAM" id="SSF52954">
    <property type="entry name" value="Class II aaRS ABD-related"/>
    <property type="match status" value="1"/>
</dbReference>
<dbReference type="SUPFAM" id="SSF55681">
    <property type="entry name" value="Class II aaRS and biotin synthetases"/>
    <property type="match status" value="1"/>
</dbReference>
<dbReference type="PROSITE" id="PS50862">
    <property type="entry name" value="AA_TRNA_LIGASE_II"/>
    <property type="match status" value="1"/>
</dbReference>